<reference key="1">
    <citation type="journal article" date="2000" name="Nature">
        <title>Sequence and analysis of chromosome 3 of the plant Arabidopsis thaliana.</title>
        <authorList>
            <person name="Salanoubat M."/>
            <person name="Lemcke K."/>
            <person name="Rieger M."/>
            <person name="Ansorge W."/>
            <person name="Unseld M."/>
            <person name="Fartmann B."/>
            <person name="Valle G."/>
            <person name="Bloecker H."/>
            <person name="Perez-Alonso M."/>
            <person name="Obermaier B."/>
            <person name="Delseny M."/>
            <person name="Boutry M."/>
            <person name="Grivell L.A."/>
            <person name="Mache R."/>
            <person name="Puigdomenech P."/>
            <person name="De Simone V."/>
            <person name="Choisne N."/>
            <person name="Artiguenave F."/>
            <person name="Robert C."/>
            <person name="Brottier P."/>
            <person name="Wincker P."/>
            <person name="Cattolico L."/>
            <person name="Weissenbach J."/>
            <person name="Saurin W."/>
            <person name="Quetier F."/>
            <person name="Schaefer M."/>
            <person name="Mueller-Auer S."/>
            <person name="Gabel C."/>
            <person name="Fuchs M."/>
            <person name="Benes V."/>
            <person name="Wurmbach E."/>
            <person name="Drzonek H."/>
            <person name="Erfle H."/>
            <person name="Jordan N."/>
            <person name="Bangert S."/>
            <person name="Wiedelmann R."/>
            <person name="Kranz H."/>
            <person name="Voss H."/>
            <person name="Holland R."/>
            <person name="Brandt P."/>
            <person name="Nyakatura G."/>
            <person name="Vezzi A."/>
            <person name="D'Angelo M."/>
            <person name="Pallavicini A."/>
            <person name="Toppo S."/>
            <person name="Simionati B."/>
            <person name="Conrad A."/>
            <person name="Hornischer K."/>
            <person name="Kauer G."/>
            <person name="Loehnert T.-H."/>
            <person name="Nordsiek G."/>
            <person name="Reichelt J."/>
            <person name="Scharfe M."/>
            <person name="Schoen O."/>
            <person name="Bargues M."/>
            <person name="Terol J."/>
            <person name="Climent J."/>
            <person name="Navarro P."/>
            <person name="Collado C."/>
            <person name="Perez-Perez A."/>
            <person name="Ottenwaelder B."/>
            <person name="Duchemin D."/>
            <person name="Cooke R."/>
            <person name="Laudie M."/>
            <person name="Berger-Llauro C."/>
            <person name="Purnelle B."/>
            <person name="Masuy D."/>
            <person name="de Haan M."/>
            <person name="Maarse A.C."/>
            <person name="Alcaraz J.-P."/>
            <person name="Cottet A."/>
            <person name="Casacuberta E."/>
            <person name="Monfort A."/>
            <person name="Argiriou A."/>
            <person name="Flores M."/>
            <person name="Liguori R."/>
            <person name="Vitale D."/>
            <person name="Mannhaupt G."/>
            <person name="Haase D."/>
            <person name="Schoof H."/>
            <person name="Rudd S."/>
            <person name="Zaccaria P."/>
            <person name="Mewes H.-W."/>
            <person name="Mayer K.F.X."/>
            <person name="Kaul S."/>
            <person name="Town C.D."/>
            <person name="Koo H.L."/>
            <person name="Tallon L.J."/>
            <person name="Jenkins J."/>
            <person name="Rooney T."/>
            <person name="Rizzo M."/>
            <person name="Walts A."/>
            <person name="Utterback T."/>
            <person name="Fujii C.Y."/>
            <person name="Shea T.P."/>
            <person name="Creasy T.H."/>
            <person name="Haas B."/>
            <person name="Maiti R."/>
            <person name="Wu D."/>
            <person name="Peterson J."/>
            <person name="Van Aken S."/>
            <person name="Pai G."/>
            <person name="Militscher J."/>
            <person name="Sellers P."/>
            <person name="Gill J.E."/>
            <person name="Feldblyum T.V."/>
            <person name="Preuss D."/>
            <person name="Lin X."/>
            <person name="Nierman W.C."/>
            <person name="Salzberg S.L."/>
            <person name="White O."/>
            <person name="Venter J.C."/>
            <person name="Fraser C.M."/>
            <person name="Kaneko T."/>
            <person name="Nakamura Y."/>
            <person name="Sato S."/>
            <person name="Kato T."/>
            <person name="Asamizu E."/>
            <person name="Sasamoto S."/>
            <person name="Kimura T."/>
            <person name="Idesawa K."/>
            <person name="Kawashima K."/>
            <person name="Kishida Y."/>
            <person name="Kiyokawa C."/>
            <person name="Kohara M."/>
            <person name="Matsumoto M."/>
            <person name="Matsuno A."/>
            <person name="Muraki A."/>
            <person name="Nakayama S."/>
            <person name="Nakazaki N."/>
            <person name="Shinpo S."/>
            <person name="Takeuchi C."/>
            <person name="Wada T."/>
            <person name="Watanabe A."/>
            <person name="Yamada M."/>
            <person name="Yasuda M."/>
            <person name="Tabata S."/>
        </authorList>
    </citation>
    <scope>NUCLEOTIDE SEQUENCE [LARGE SCALE GENOMIC DNA]</scope>
    <source>
        <strain>cv. Columbia</strain>
    </source>
</reference>
<reference key="2">
    <citation type="journal article" date="2017" name="Plant J.">
        <title>Araport11: a complete reannotation of the Arabidopsis thaliana reference genome.</title>
        <authorList>
            <person name="Cheng C.Y."/>
            <person name="Krishnakumar V."/>
            <person name="Chan A.P."/>
            <person name="Thibaud-Nissen F."/>
            <person name="Schobel S."/>
            <person name="Town C.D."/>
        </authorList>
    </citation>
    <scope>GENOME REANNOTATION</scope>
    <source>
        <strain>cv. Columbia</strain>
    </source>
</reference>
<reference key="3">
    <citation type="submission" date="2004-03" db="EMBL/GenBank/DDBJ databases">
        <title>Arabidopsis ORF clones.</title>
        <authorList>
            <person name="Cheuk R.F."/>
            <person name="Chen H."/>
            <person name="Kim C.J."/>
            <person name="Shinn P."/>
            <person name="Carninci P."/>
            <person name="Hayashizaki Y."/>
            <person name="Ishida J."/>
            <person name="Kamiya A."/>
            <person name="Kawai J."/>
            <person name="Narusaka M."/>
            <person name="Sakurai T."/>
            <person name="Satou M."/>
            <person name="Seki M."/>
            <person name="Shinozaki K."/>
            <person name="Ecker J.R."/>
        </authorList>
    </citation>
    <scope>NUCLEOTIDE SEQUENCE [LARGE SCALE MRNA]</scope>
    <source>
        <strain>cv. Columbia</strain>
    </source>
</reference>
<reference key="4">
    <citation type="submission" date="2006-07" db="EMBL/GenBank/DDBJ databases">
        <title>Large-scale analysis of RIKEN Arabidopsis full-length (RAFL) cDNAs.</title>
        <authorList>
            <person name="Totoki Y."/>
            <person name="Seki M."/>
            <person name="Ishida J."/>
            <person name="Nakajima M."/>
            <person name="Enju A."/>
            <person name="Kamiya A."/>
            <person name="Narusaka M."/>
            <person name="Shin-i T."/>
            <person name="Nakagawa M."/>
            <person name="Sakamoto N."/>
            <person name="Oishi K."/>
            <person name="Kohara Y."/>
            <person name="Kobayashi M."/>
            <person name="Toyoda A."/>
            <person name="Sakaki Y."/>
            <person name="Sakurai T."/>
            <person name="Iida K."/>
            <person name="Akiyama K."/>
            <person name="Satou M."/>
            <person name="Toyoda T."/>
            <person name="Konagaya A."/>
            <person name="Carninci P."/>
            <person name="Kawai J."/>
            <person name="Hayashizaki Y."/>
            <person name="Shinozaki K."/>
        </authorList>
    </citation>
    <scope>NUCLEOTIDE SEQUENCE [LARGE SCALE MRNA]</scope>
    <source>
        <strain>cv. Columbia</strain>
    </source>
</reference>
<reference key="5">
    <citation type="journal article" date="2002" name="Plant Physiol.">
        <title>Inositol phospholipid metabolism in Arabidopsis. Characterized and putative isoforms of inositol phospholipid kinase and phosphoinositide-specific phospholipase C.</title>
        <authorList>
            <person name="Mueller-Roeber B."/>
            <person name="Pical C."/>
        </authorList>
    </citation>
    <scope>GENE FAMILY</scope>
    <scope>NOMENCLATURE</scope>
</reference>
<reference key="6">
    <citation type="journal article" date="2004" name="New Phytol.">
        <title>Gene-specific expression and calcium activation of Arabidopsis thaliana phospholipase C isoforms.</title>
        <authorList>
            <person name="Hunt L."/>
            <person name="Otterhag L."/>
            <person name="Lee J.C."/>
            <person name="Lasheen T."/>
            <person name="Hunt J."/>
            <person name="Seki M."/>
            <person name="Shinozaki K."/>
            <person name="Sommarin M."/>
            <person name="Gilmour D.J."/>
            <person name="Pical C."/>
            <person name="Gray J.E."/>
        </authorList>
        <dbReference type="AGRICOLA" id="IND43668249"/>
    </citation>
    <scope>TISSUE SPECIFICITY</scope>
</reference>
<dbReference type="EC" id="3.1.4.11"/>
<dbReference type="EMBL" id="AL133292">
    <property type="protein sequence ID" value="CAB61968.1"/>
    <property type="status" value="ALT_SEQ"/>
    <property type="molecule type" value="Genomic_DNA"/>
</dbReference>
<dbReference type="EMBL" id="CP002686">
    <property type="protein sequence ID" value="AEE78257.1"/>
    <property type="molecule type" value="Genomic_DNA"/>
</dbReference>
<dbReference type="EMBL" id="BT011755">
    <property type="protein sequence ID" value="AAS49118.1"/>
    <property type="molecule type" value="mRNA"/>
</dbReference>
<dbReference type="EMBL" id="AK226689">
    <property type="protein sequence ID" value="BAE98796.1"/>
    <property type="molecule type" value="mRNA"/>
</dbReference>
<dbReference type="PIR" id="T45658">
    <property type="entry name" value="T45658"/>
</dbReference>
<dbReference type="RefSeq" id="NP_190306.2">
    <property type="nucleotide sequence ID" value="NM_114589.5"/>
</dbReference>
<dbReference type="SMR" id="Q6NMA7"/>
<dbReference type="BioGRID" id="9195">
    <property type="interactions" value="13"/>
</dbReference>
<dbReference type="FunCoup" id="Q6NMA7">
    <property type="interactions" value="713"/>
</dbReference>
<dbReference type="IntAct" id="Q6NMA7">
    <property type="interactions" value="13"/>
</dbReference>
<dbReference type="STRING" id="3702.Q6NMA7"/>
<dbReference type="PaxDb" id="3702-AT3G47220.1"/>
<dbReference type="ProteomicsDB" id="235069"/>
<dbReference type="EnsemblPlants" id="AT3G47220.1">
    <property type="protein sequence ID" value="AT3G47220.1"/>
    <property type="gene ID" value="AT3G47220"/>
</dbReference>
<dbReference type="GeneID" id="823875"/>
<dbReference type="Gramene" id="AT3G47220.1">
    <property type="protein sequence ID" value="AT3G47220.1"/>
    <property type="gene ID" value="AT3G47220"/>
</dbReference>
<dbReference type="KEGG" id="ath:AT3G47220"/>
<dbReference type="Araport" id="AT3G47220"/>
<dbReference type="TAIR" id="AT3G47220">
    <property type="gene designation" value="PLC9"/>
</dbReference>
<dbReference type="eggNOG" id="KOG0169">
    <property type="taxonomic scope" value="Eukaryota"/>
</dbReference>
<dbReference type="HOGENOM" id="CLU_002738_3_2_1"/>
<dbReference type="InParanoid" id="Q6NMA7"/>
<dbReference type="PhylomeDB" id="Q6NMA7"/>
<dbReference type="BioCyc" id="ARA:AT3G47220-MONOMER"/>
<dbReference type="BRENDA" id="3.1.4.11">
    <property type="organism ID" value="399"/>
</dbReference>
<dbReference type="PRO" id="PR:Q6NMA7"/>
<dbReference type="Proteomes" id="UP000006548">
    <property type="component" value="Chromosome 3"/>
</dbReference>
<dbReference type="ExpressionAtlas" id="Q6NMA7">
    <property type="expression patterns" value="baseline and differential"/>
</dbReference>
<dbReference type="GO" id="GO:0005886">
    <property type="term" value="C:plasma membrane"/>
    <property type="evidence" value="ECO:0000314"/>
    <property type="project" value="TAIR"/>
</dbReference>
<dbReference type="GO" id="GO:0004435">
    <property type="term" value="F:phosphatidylinositol-4,5-bisphosphate phospholipase C activity"/>
    <property type="evidence" value="ECO:0000315"/>
    <property type="project" value="TAIR"/>
</dbReference>
<dbReference type="GO" id="GO:0055074">
    <property type="term" value="P:calcium ion homeostasis"/>
    <property type="evidence" value="ECO:0000315"/>
    <property type="project" value="TAIR"/>
</dbReference>
<dbReference type="GO" id="GO:0010286">
    <property type="term" value="P:heat acclimation"/>
    <property type="evidence" value="ECO:0000315"/>
    <property type="project" value="TAIR"/>
</dbReference>
<dbReference type="GO" id="GO:0035556">
    <property type="term" value="P:intracellular signal transduction"/>
    <property type="evidence" value="ECO:0007669"/>
    <property type="project" value="InterPro"/>
</dbReference>
<dbReference type="GO" id="GO:0016042">
    <property type="term" value="P:lipid catabolic process"/>
    <property type="evidence" value="ECO:0007669"/>
    <property type="project" value="UniProtKB-KW"/>
</dbReference>
<dbReference type="CDD" id="cd00275">
    <property type="entry name" value="C2_PLC_like"/>
    <property type="match status" value="1"/>
</dbReference>
<dbReference type="Gene3D" id="2.60.40.150">
    <property type="entry name" value="C2 domain"/>
    <property type="match status" value="1"/>
</dbReference>
<dbReference type="Gene3D" id="3.20.20.190">
    <property type="entry name" value="Phosphatidylinositol (PI) phosphodiesterase"/>
    <property type="match status" value="1"/>
</dbReference>
<dbReference type="InterPro" id="IPR000008">
    <property type="entry name" value="C2_dom"/>
</dbReference>
<dbReference type="InterPro" id="IPR035892">
    <property type="entry name" value="C2_domain_sf"/>
</dbReference>
<dbReference type="InterPro" id="IPR001192">
    <property type="entry name" value="PI-PLC_fam"/>
</dbReference>
<dbReference type="InterPro" id="IPR017946">
    <property type="entry name" value="PLC-like_Pdiesterase_TIM-brl"/>
</dbReference>
<dbReference type="InterPro" id="IPR000909">
    <property type="entry name" value="PLipase_C_PInositol-sp_X_dom"/>
</dbReference>
<dbReference type="InterPro" id="IPR001711">
    <property type="entry name" value="PLipase_C_Pinositol-sp_Y"/>
</dbReference>
<dbReference type="PANTHER" id="PTHR10336:SF204">
    <property type="entry name" value="PHOSPHOINOSITIDE PHOSPHOLIPASE C 4-RELATED"/>
    <property type="match status" value="1"/>
</dbReference>
<dbReference type="PANTHER" id="PTHR10336">
    <property type="entry name" value="PHOSPHOINOSITIDE-SPECIFIC PHOSPHOLIPASE C FAMILY PROTEIN"/>
    <property type="match status" value="1"/>
</dbReference>
<dbReference type="Pfam" id="PF00168">
    <property type="entry name" value="C2"/>
    <property type="match status" value="1"/>
</dbReference>
<dbReference type="Pfam" id="PF00388">
    <property type="entry name" value="PI-PLC-X"/>
    <property type="match status" value="1"/>
</dbReference>
<dbReference type="Pfam" id="PF00387">
    <property type="entry name" value="PI-PLC-Y"/>
    <property type="match status" value="1"/>
</dbReference>
<dbReference type="PRINTS" id="PR00390">
    <property type="entry name" value="PHPHLIPASEC"/>
</dbReference>
<dbReference type="SMART" id="SM00239">
    <property type="entry name" value="C2"/>
    <property type="match status" value="1"/>
</dbReference>
<dbReference type="SMART" id="SM00148">
    <property type="entry name" value="PLCXc"/>
    <property type="match status" value="1"/>
</dbReference>
<dbReference type="SMART" id="SM00149">
    <property type="entry name" value="PLCYc"/>
    <property type="match status" value="1"/>
</dbReference>
<dbReference type="SUPFAM" id="SSF49562">
    <property type="entry name" value="C2 domain (Calcium/lipid-binding domain, CaLB)"/>
    <property type="match status" value="1"/>
</dbReference>
<dbReference type="SUPFAM" id="SSF51695">
    <property type="entry name" value="PLC-like phosphodiesterases"/>
    <property type="match status" value="1"/>
</dbReference>
<dbReference type="PROSITE" id="PS50004">
    <property type="entry name" value="C2"/>
    <property type="match status" value="1"/>
</dbReference>
<dbReference type="PROSITE" id="PS50007">
    <property type="entry name" value="PIPLC_X_DOMAIN"/>
    <property type="match status" value="1"/>
</dbReference>
<dbReference type="PROSITE" id="PS50008">
    <property type="entry name" value="PIPLC_Y_DOMAIN"/>
    <property type="match status" value="1"/>
</dbReference>
<sequence length="531" mass="61165">MVNLRKKFEMKQANQPGRVPNYFRNKYHGYDDDMPNLLPTFIKLLDTEKDEDGAGLNAAEQIDRELKSRKCDILKFRNLTILELPHLNEFLFSTELNPPISDQVRHRDMNAPLSHYFIHTSLKSYFTGNNVFGRLYSIEPIIDALKQGVRVVELDLLPFGKDGICVRPKWNFEKPLELQECLDAIKQHAFTPTRSYPVIITIKDSLKPDLQSKVTQMIDQTFGDMVYHEDPQQSLEEFPSPAELQNKILISRRPPTKLLYAKAVENGVELEIQEGSTDKNYQSVVGFHAVEPRGMLQKALTDDVQQPGWYERDVISFTQNKFLRTRPKKRNLLSNPPYKPQRAWMHGAQMIALSRQDDKEKLWLMQGMFRANGGCGYVKKPNFLLNAGSSGVFYPTENPVVVKTLKVKIYMGDGWIVDFKKRIGRLSKPDLYVRISIAGVPHDEKIMNTTVKNNEWKPTWGEEFTFPLTYPDLALISFEVYDYEVSTPDYFCGQTCLPVSELIEGIRAVPLYDERGKACSSTMLLTRFKWS</sequence>
<accession>Q6NMA7</accession>
<accession>Q9SD51</accession>
<organism>
    <name type="scientific">Arabidopsis thaliana</name>
    <name type="common">Mouse-ear cress</name>
    <dbReference type="NCBI Taxonomy" id="3702"/>
    <lineage>
        <taxon>Eukaryota</taxon>
        <taxon>Viridiplantae</taxon>
        <taxon>Streptophyta</taxon>
        <taxon>Embryophyta</taxon>
        <taxon>Tracheophyta</taxon>
        <taxon>Spermatophyta</taxon>
        <taxon>Magnoliopsida</taxon>
        <taxon>eudicotyledons</taxon>
        <taxon>Gunneridae</taxon>
        <taxon>Pentapetalae</taxon>
        <taxon>rosids</taxon>
        <taxon>malvids</taxon>
        <taxon>Brassicales</taxon>
        <taxon>Brassicaceae</taxon>
        <taxon>Camelineae</taxon>
        <taxon>Arabidopsis</taxon>
    </lineage>
</organism>
<evidence type="ECO:0000250" key="1"/>
<evidence type="ECO:0000250" key="2">
    <source>
        <dbReference type="UniProtKB" id="Q9LY51"/>
    </source>
</evidence>
<evidence type="ECO:0000255" key="3">
    <source>
        <dbReference type="PROSITE-ProRule" id="PRU00041"/>
    </source>
</evidence>
<evidence type="ECO:0000255" key="4">
    <source>
        <dbReference type="PROSITE-ProRule" id="PRU00270"/>
    </source>
</evidence>
<evidence type="ECO:0000255" key="5">
    <source>
        <dbReference type="PROSITE-ProRule" id="PRU00271"/>
    </source>
</evidence>
<evidence type="ECO:0000269" key="6">
    <source ref="6"/>
</evidence>
<evidence type="ECO:0000305" key="7"/>
<gene>
    <name type="primary">PLC9</name>
    <name type="ordered locus">At3g47220</name>
    <name type="ORF">F13I12.270</name>
</gene>
<name>PLCD9_ARATH</name>
<feature type="chain" id="PRO_0000324134" description="Phosphoinositide phospholipase C 9">
    <location>
        <begin position="1"/>
        <end position="531"/>
    </location>
</feature>
<feature type="domain" description="PI-PLC X-box" evidence="4">
    <location>
        <begin position="107"/>
        <end position="253"/>
    </location>
</feature>
<feature type="domain" description="PI-PLC Y-box" evidence="5">
    <location>
        <begin position="265"/>
        <end position="385"/>
    </location>
</feature>
<feature type="domain" description="C2" evidence="3">
    <location>
        <begin position="386"/>
        <end position="513"/>
    </location>
</feature>
<feature type="modified residue" description="Phosphoserine" evidence="2">
    <location>
        <position position="276"/>
    </location>
</feature>
<protein>
    <recommendedName>
        <fullName>Phosphoinositide phospholipase C 9</fullName>
        <ecNumber>3.1.4.11</ecNumber>
    </recommendedName>
    <alternativeName>
        <fullName>Phosphoinositide phospholipase PLC9</fullName>
        <shortName>AtPLC9</shortName>
        <shortName>PI-PLC9</shortName>
    </alternativeName>
</protein>
<proteinExistence type="evidence at transcript level"/>
<comment type="function">
    <text evidence="1">The production of the second messenger molecules diacylglycerol (DAG) and inositol 1,4,5-trisphosphate (IP3) is mediated by activated phosphatidylinositol-specific phospholipase C enzymes.</text>
</comment>
<comment type="catalytic activity">
    <reaction>
        <text>a 1,2-diacyl-sn-glycero-3-phospho-(1D-myo-inositol-4,5-bisphosphate) + H2O = 1D-myo-inositol 1,4,5-trisphosphate + a 1,2-diacyl-sn-glycerol + H(+)</text>
        <dbReference type="Rhea" id="RHEA:33179"/>
        <dbReference type="ChEBI" id="CHEBI:15377"/>
        <dbReference type="ChEBI" id="CHEBI:15378"/>
        <dbReference type="ChEBI" id="CHEBI:17815"/>
        <dbReference type="ChEBI" id="CHEBI:58456"/>
        <dbReference type="ChEBI" id="CHEBI:203600"/>
        <dbReference type="EC" id="3.1.4.11"/>
    </reaction>
</comment>
<comment type="cofactor">
    <cofactor>
        <name>Ca(2+)</name>
        <dbReference type="ChEBI" id="CHEBI:29108"/>
    </cofactor>
</comment>
<comment type="subcellular location">
    <subcellularLocation>
        <location evidence="1">Cell membrane</location>
        <topology evidence="1">Peripheral membrane protein</topology>
    </subcellularLocation>
</comment>
<comment type="tissue specificity">
    <text evidence="6">Expressed in leaves, roots, flowers and siliques.</text>
</comment>
<comment type="caution">
    <text evidence="7">Contains substitutions of several amino acids thought to be essential for catalytic activity. Its enzyme activity is therefore unsure.</text>
</comment>
<comment type="sequence caution" evidence="7">
    <conflict type="erroneous gene model prediction">
        <sequence resource="EMBL-CDS" id="CAB61968"/>
    </conflict>
</comment>
<keyword id="KW-1003">Cell membrane</keyword>
<keyword id="KW-0378">Hydrolase</keyword>
<keyword id="KW-0442">Lipid degradation</keyword>
<keyword id="KW-0443">Lipid metabolism</keyword>
<keyword id="KW-0472">Membrane</keyword>
<keyword id="KW-0597">Phosphoprotein</keyword>
<keyword id="KW-1185">Reference proteome</keyword>
<keyword id="KW-0807">Transducer</keyword>